<gene>
    <name evidence="1" type="primary">tilS</name>
    <name type="ordered locus">FTN_1250</name>
</gene>
<reference key="1">
    <citation type="journal article" date="2007" name="Genome Biol.">
        <title>Comparison of Francisella tularensis genomes reveals evolutionary events associated with the emergence of human pathogenic strains.</title>
        <authorList>
            <person name="Rohmer L."/>
            <person name="Fong C."/>
            <person name="Abmayr S."/>
            <person name="Wasnick M."/>
            <person name="Larson Freeman T.J."/>
            <person name="Radey M."/>
            <person name="Guina T."/>
            <person name="Svensson K."/>
            <person name="Hayden H.S."/>
            <person name="Jacobs M."/>
            <person name="Gallagher L.A."/>
            <person name="Manoil C."/>
            <person name="Ernst R.K."/>
            <person name="Drees B."/>
            <person name="Buckley D."/>
            <person name="Haugen E."/>
            <person name="Bovee D."/>
            <person name="Zhou Y."/>
            <person name="Chang J."/>
            <person name="Levy R."/>
            <person name="Lim R."/>
            <person name="Gillett W."/>
            <person name="Guenthener D."/>
            <person name="Kang A."/>
            <person name="Shaffer S.A."/>
            <person name="Taylor G."/>
            <person name="Chen J."/>
            <person name="Gallis B."/>
            <person name="D'Argenio D.A."/>
            <person name="Forsman M."/>
            <person name="Olson M.V."/>
            <person name="Goodlett D.R."/>
            <person name="Kaul R."/>
            <person name="Miller S.I."/>
            <person name="Brittnacher M.J."/>
        </authorList>
    </citation>
    <scope>NUCLEOTIDE SEQUENCE [LARGE SCALE GENOMIC DNA]</scope>
    <source>
        <strain>U112</strain>
    </source>
</reference>
<name>TILS_FRATN</name>
<sequence>MSISKSLVLNEIKKFSPSHIIIGYSGGVDSSVLLNISKELDIPLIAIYINHNLHRDSLKWQIHCQQTCQRYNLQFISHSLDKVPKGESFEAWASKQRMAFFQKIMQPYSKPLLLLGHHQDDQAETFLIQAIRGSGLAGLAGIPHYKELHHGGVLRPLLKYSKIEIEEFAKLNNISYIYDDSNEDIKYRRNLIRNQIIPILQQVNPNIGQTLSRSANICAESNNILQKLLTERLQSISQDTNLIISELIKLDDDIQKSLLHLWFKQNTQQSLKSKQIKELHLAINNPSTGWQIDISNYYQIHIQYNQLIIKYPTTINDMSKEDIISWLSKNLNEEIDLTKIVIRDRKPDDKCKYRGRNKPNKLKILFQELQIPTTERSKAKIILKDQQIIAVYPFFICG</sequence>
<organism>
    <name type="scientific">Francisella tularensis subsp. novicida (strain U112)</name>
    <dbReference type="NCBI Taxonomy" id="401614"/>
    <lineage>
        <taxon>Bacteria</taxon>
        <taxon>Pseudomonadati</taxon>
        <taxon>Pseudomonadota</taxon>
        <taxon>Gammaproteobacteria</taxon>
        <taxon>Thiotrichales</taxon>
        <taxon>Francisellaceae</taxon>
        <taxon>Francisella</taxon>
    </lineage>
</organism>
<dbReference type="EC" id="6.3.4.19" evidence="1"/>
<dbReference type="EMBL" id="CP000439">
    <property type="protein sequence ID" value="ABK90131.1"/>
    <property type="molecule type" value="Genomic_DNA"/>
</dbReference>
<dbReference type="RefSeq" id="WP_003039989.1">
    <property type="nucleotide sequence ID" value="NC_008601.1"/>
</dbReference>
<dbReference type="SMR" id="A0Q7B6"/>
<dbReference type="KEGG" id="ftn:FTN_1250"/>
<dbReference type="KEGG" id="ftx:AW25_756"/>
<dbReference type="BioCyc" id="FTUL401614:G1G75-1295-MONOMER"/>
<dbReference type="Proteomes" id="UP000000762">
    <property type="component" value="Chromosome"/>
</dbReference>
<dbReference type="GO" id="GO:0005737">
    <property type="term" value="C:cytoplasm"/>
    <property type="evidence" value="ECO:0007669"/>
    <property type="project" value="UniProtKB-SubCell"/>
</dbReference>
<dbReference type="GO" id="GO:0005524">
    <property type="term" value="F:ATP binding"/>
    <property type="evidence" value="ECO:0007669"/>
    <property type="project" value="UniProtKB-UniRule"/>
</dbReference>
<dbReference type="GO" id="GO:0032267">
    <property type="term" value="F:tRNA(Ile)-lysidine synthase activity"/>
    <property type="evidence" value="ECO:0007669"/>
    <property type="project" value="UniProtKB-EC"/>
</dbReference>
<dbReference type="GO" id="GO:0006400">
    <property type="term" value="P:tRNA modification"/>
    <property type="evidence" value="ECO:0007669"/>
    <property type="project" value="UniProtKB-UniRule"/>
</dbReference>
<dbReference type="CDD" id="cd01992">
    <property type="entry name" value="TilS_N"/>
    <property type="match status" value="1"/>
</dbReference>
<dbReference type="Gene3D" id="3.40.50.620">
    <property type="entry name" value="HUPs"/>
    <property type="match status" value="1"/>
</dbReference>
<dbReference type="HAMAP" id="MF_01161">
    <property type="entry name" value="tRNA_Ile_lys_synt"/>
    <property type="match status" value="1"/>
</dbReference>
<dbReference type="InterPro" id="IPR012796">
    <property type="entry name" value="Lysidine-tRNA-synth_C"/>
</dbReference>
<dbReference type="InterPro" id="IPR014729">
    <property type="entry name" value="Rossmann-like_a/b/a_fold"/>
</dbReference>
<dbReference type="InterPro" id="IPR011063">
    <property type="entry name" value="TilS/TtcA_N"/>
</dbReference>
<dbReference type="InterPro" id="IPR012094">
    <property type="entry name" value="tRNA_Ile_lys_synt"/>
</dbReference>
<dbReference type="InterPro" id="IPR012795">
    <property type="entry name" value="tRNA_Ile_lys_synt_N"/>
</dbReference>
<dbReference type="InterPro" id="IPR015262">
    <property type="entry name" value="tRNA_Ile_lys_synt_subst-bd"/>
</dbReference>
<dbReference type="NCBIfam" id="TIGR02433">
    <property type="entry name" value="lysidine_TilS_C"/>
    <property type="match status" value="1"/>
</dbReference>
<dbReference type="NCBIfam" id="TIGR02432">
    <property type="entry name" value="lysidine_TilS_N"/>
    <property type="match status" value="1"/>
</dbReference>
<dbReference type="PANTHER" id="PTHR43033">
    <property type="entry name" value="TRNA(ILE)-LYSIDINE SYNTHASE-RELATED"/>
    <property type="match status" value="1"/>
</dbReference>
<dbReference type="PANTHER" id="PTHR43033:SF1">
    <property type="entry name" value="TRNA(ILE)-LYSIDINE SYNTHASE-RELATED"/>
    <property type="match status" value="1"/>
</dbReference>
<dbReference type="Pfam" id="PF01171">
    <property type="entry name" value="ATP_bind_3"/>
    <property type="match status" value="1"/>
</dbReference>
<dbReference type="Pfam" id="PF09179">
    <property type="entry name" value="TilS"/>
    <property type="match status" value="1"/>
</dbReference>
<dbReference type="Pfam" id="PF11734">
    <property type="entry name" value="TilS_C"/>
    <property type="match status" value="1"/>
</dbReference>
<dbReference type="SMART" id="SM00977">
    <property type="entry name" value="TilS_C"/>
    <property type="match status" value="1"/>
</dbReference>
<dbReference type="SUPFAM" id="SSF52402">
    <property type="entry name" value="Adenine nucleotide alpha hydrolases-like"/>
    <property type="match status" value="1"/>
</dbReference>
<dbReference type="SUPFAM" id="SSF82829">
    <property type="entry name" value="MesJ substrate recognition domain-like"/>
    <property type="match status" value="1"/>
</dbReference>
<dbReference type="SUPFAM" id="SSF56037">
    <property type="entry name" value="PheT/TilS domain"/>
    <property type="match status" value="1"/>
</dbReference>
<feature type="chain" id="PRO_1000065613" description="tRNA(Ile)-lysidine synthase">
    <location>
        <begin position="1"/>
        <end position="398"/>
    </location>
</feature>
<feature type="binding site" evidence="1">
    <location>
        <begin position="25"/>
        <end position="30"/>
    </location>
    <ligand>
        <name>ATP</name>
        <dbReference type="ChEBI" id="CHEBI:30616"/>
    </ligand>
</feature>
<keyword id="KW-0067">ATP-binding</keyword>
<keyword id="KW-0963">Cytoplasm</keyword>
<keyword id="KW-0436">Ligase</keyword>
<keyword id="KW-0547">Nucleotide-binding</keyword>
<keyword id="KW-0819">tRNA processing</keyword>
<comment type="function">
    <text evidence="1">Ligates lysine onto the cytidine present at position 34 of the AUA codon-specific tRNA(Ile) that contains the anticodon CAU, in an ATP-dependent manner. Cytidine is converted to lysidine, thus changing the amino acid specificity of the tRNA from methionine to isoleucine.</text>
</comment>
<comment type="catalytic activity">
    <reaction evidence="1">
        <text>cytidine(34) in tRNA(Ile2) + L-lysine + ATP = lysidine(34) in tRNA(Ile2) + AMP + diphosphate + H(+)</text>
        <dbReference type="Rhea" id="RHEA:43744"/>
        <dbReference type="Rhea" id="RHEA-COMP:10625"/>
        <dbReference type="Rhea" id="RHEA-COMP:10670"/>
        <dbReference type="ChEBI" id="CHEBI:15378"/>
        <dbReference type="ChEBI" id="CHEBI:30616"/>
        <dbReference type="ChEBI" id="CHEBI:32551"/>
        <dbReference type="ChEBI" id="CHEBI:33019"/>
        <dbReference type="ChEBI" id="CHEBI:82748"/>
        <dbReference type="ChEBI" id="CHEBI:83665"/>
        <dbReference type="ChEBI" id="CHEBI:456215"/>
        <dbReference type="EC" id="6.3.4.19"/>
    </reaction>
</comment>
<comment type="subcellular location">
    <subcellularLocation>
        <location evidence="1">Cytoplasm</location>
    </subcellularLocation>
</comment>
<comment type="domain">
    <text>The N-terminal region contains the highly conserved SGGXDS motif, predicted to be a P-loop motif involved in ATP binding.</text>
</comment>
<comment type="similarity">
    <text evidence="1">Belongs to the tRNA(Ile)-lysidine synthase family.</text>
</comment>
<protein>
    <recommendedName>
        <fullName evidence="1">tRNA(Ile)-lysidine synthase</fullName>
        <ecNumber evidence="1">6.3.4.19</ecNumber>
    </recommendedName>
    <alternativeName>
        <fullName evidence="1">tRNA(Ile)-2-lysyl-cytidine synthase</fullName>
    </alternativeName>
    <alternativeName>
        <fullName evidence="1">tRNA(Ile)-lysidine synthetase</fullName>
    </alternativeName>
</protein>
<proteinExistence type="inferred from homology"/>
<evidence type="ECO:0000255" key="1">
    <source>
        <dbReference type="HAMAP-Rule" id="MF_01161"/>
    </source>
</evidence>
<accession>A0Q7B6</accession>